<dbReference type="EMBL" id="AB275286">
    <property type="protein sequence ID" value="BAF33063.1"/>
    <property type="molecule type" value="Genomic_RNA"/>
</dbReference>
<dbReference type="SMR" id="Q08IG8"/>
<dbReference type="Proteomes" id="UP000008578">
    <property type="component" value="Genome"/>
</dbReference>
<dbReference type="GO" id="GO:0042025">
    <property type="term" value="C:host cell nucleus"/>
    <property type="evidence" value="ECO:0007669"/>
    <property type="project" value="UniProtKB-SubCell"/>
</dbReference>
<dbReference type="GO" id="GO:0016020">
    <property type="term" value="C:membrane"/>
    <property type="evidence" value="ECO:0007669"/>
    <property type="project" value="UniProtKB-KW"/>
</dbReference>
<dbReference type="GO" id="GO:0055036">
    <property type="term" value="C:virion membrane"/>
    <property type="evidence" value="ECO:0007669"/>
    <property type="project" value="UniProtKB-SubCell"/>
</dbReference>
<dbReference type="GO" id="GO:0003723">
    <property type="term" value="F:RNA binding"/>
    <property type="evidence" value="ECO:0007669"/>
    <property type="project" value="UniProtKB-UniRule"/>
</dbReference>
<dbReference type="GO" id="GO:0039660">
    <property type="term" value="F:structural constituent of virion"/>
    <property type="evidence" value="ECO:0007669"/>
    <property type="project" value="UniProtKB-UniRule"/>
</dbReference>
<dbReference type="GO" id="GO:0046761">
    <property type="term" value="P:viral budding from plasma membrane"/>
    <property type="evidence" value="ECO:0007669"/>
    <property type="project" value="UniProtKB-UniRule"/>
</dbReference>
<dbReference type="FunFam" id="1.10.10.180:FF:000001">
    <property type="entry name" value="Matrix protein 1"/>
    <property type="match status" value="1"/>
</dbReference>
<dbReference type="FunFam" id="1.20.91.10:FF:000001">
    <property type="entry name" value="Matrix protein 1"/>
    <property type="match status" value="1"/>
</dbReference>
<dbReference type="Gene3D" id="1.10.10.180">
    <property type="match status" value="1"/>
</dbReference>
<dbReference type="Gene3D" id="1.20.91.10">
    <property type="match status" value="1"/>
</dbReference>
<dbReference type="HAMAP" id="MF_04068">
    <property type="entry name" value="INFV_M1"/>
    <property type="match status" value="1"/>
</dbReference>
<dbReference type="InterPro" id="IPR036039">
    <property type="entry name" value="Flu_matrix_M1"/>
</dbReference>
<dbReference type="InterPro" id="IPR013188">
    <property type="entry name" value="Flu_matrix_M1_C"/>
</dbReference>
<dbReference type="InterPro" id="IPR001561">
    <property type="entry name" value="Flu_matrix_M1_N"/>
</dbReference>
<dbReference type="InterPro" id="IPR015423">
    <property type="entry name" value="Flu_matrix_M1_N_sub1"/>
</dbReference>
<dbReference type="InterPro" id="IPR015799">
    <property type="entry name" value="Flu_matrix_M1_N_sub2"/>
</dbReference>
<dbReference type="InterPro" id="IPR037533">
    <property type="entry name" value="INFV_M1"/>
</dbReference>
<dbReference type="Pfam" id="PF00598">
    <property type="entry name" value="Flu_M1"/>
    <property type="match status" value="1"/>
</dbReference>
<dbReference type="Pfam" id="PF08289">
    <property type="entry name" value="Flu_M1_C"/>
    <property type="match status" value="1"/>
</dbReference>
<dbReference type="SMART" id="SM00759">
    <property type="entry name" value="Flu_M1_C"/>
    <property type="match status" value="1"/>
</dbReference>
<dbReference type="SUPFAM" id="SSF48145">
    <property type="entry name" value="Influenza virus matrix protein M1"/>
    <property type="match status" value="1"/>
</dbReference>
<comment type="function">
    <text evidence="1">Plays critical roles in virus replication, from virus entry and uncoating to assembly and budding of the virus particle. M1 binding to ribonucleocapsids (RNPs) in nucleus seems to inhibit viral transcription. Interaction of viral NEP with M1-RNP is thought to promote nuclear export of the complex, which is targeted to the virion assembly site at the apical plasma membrane in polarized epithelial cells. Interactions with NA and HA may bring M1, a non-raft-associated protein, into lipid rafts. Forms a continuous shell on the inner side of the lipid bilayer in virion, where it binds the RNP. During virus entry into cell, the M2 ion channel acidifies the internal virion core, inducing M1 dissociation from the RNP. M1-free RNPs are transported to the nucleus, where viral transcription and replication can take place.</text>
</comment>
<comment type="function">
    <text evidence="1">Determines the virion's shape: spherical or filamentous. Clinical isolates of influenza are characterized by the presence of significant proportion of filamentous virions, whereas after multiple passage on eggs or cell culture, virions have only spherical morphology. Filamentous virions are thought to be important to infect neighboring cells, and spherical virions more suited to spread through aerosol between hosts organisms.</text>
</comment>
<comment type="subunit">
    <text evidence="1">Homodimer and homomultimer. Interacts with NEP. Binds ribonucleocapsid by both interacting with genomic RNA and NP protein. May interact with HA and NA. Cannot bind NP without genomic RNA.</text>
</comment>
<comment type="subcellular location">
    <subcellularLocation>
        <location evidence="1">Virion membrane</location>
        <topology evidence="1">Peripheral membrane protein</topology>
        <orientation evidence="1">Cytoplasmic side</orientation>
    </subcellularLocation>
    <subcellularLocation>
        <location evidence="1">Host nucleus</location>
    </subcellularLocation>
</comment>
<comment type="alternative products">
    <event type="alternative splicing"/>
    <isoform>
        <id>Q08IG8-1</id>
        <name>M1</name>
        <sequence type="displayed"/>
    </isoform>
    <isoform>
        <id>Q08IG9-1</id>
        <name>M2</name>
        <sequence type="external"/>
    </isoform>
    <text>Only the first 9 residues are shared by the 2 isoforms.</text>
</comment>
<comment type="miscellaneous">
    <text evidence="1">Most abundant protein in virion. When expressed alone can form virus-like particles in transfected cells.</text>
</comment>
<comment type="similarity">
    <text evidence="1">Belongs to the influenza viruses Matrix protein M1 family.</text>
</comment>
<evidence type="ECO:0000255" key="1">
    <source>
        <dbReference type="HAMAP-Rule" id="MF_04068"/>
    </source>
</evidence>
<proteinExistence type="inferred from homology"/>
<accession>Q08IG8</accession>
<organism>
    <name type="scientific">Influenza A virus (strain A/Duck/Hokkaido/8/1980 H3N8)</name>
    <dbReference type="NCBI Taxonomy" id="387207"/>
    <lineage>
        <taxon>Viruses</taxon>
        <taxon>Riboviria</taxon>
        <taxon>Orthornavirae</taxon>
        <taxon>Negarnaviricota</taxon>
        <taxon>Polyploviricotina</taxon>
        <taxon>Insthoviricetes</taxon>
        <taxon>Articulavirales</taxon>
        <taxon>Orthomyxoviridae</taxon>
        <taxon>Alphainfluenzavirus</taxon>
        <taxon>Alphainfluenzavirus influenzae</taxon>
        <taxon>Influenza A virus</taxon>
    </lineage>
</organism>
<reference key="1">
    <citation type="submission" date="2006-09" db="EMBL/GenBank/DDBJ databases">
        <title>Evolutionary characterization of H3N8 viruses isolated from ducks in Hokkaido.</title>
        <authorList>
            <person name="Kida H."/>
            <person name="Sakoda Y."/>
        </authorList>
    </citation>
    <scope>NUCLEOTIDE SEQUENCE [GENOMIC RNA]</scope>
</reference>
<organismHost>
    <name type="scientific">Aves</name>
    <dbReference type="NCBI Taxonomy" id="8782"/>
</organismHost>
<organismHost>
    <name type="scientific">Equus caballus</name>
    <name type="common">Horse</name>
    <dbReference type="NCBI Taxonomy" id="9796"/>
</organismHost>
<gene>
    <name evidence="1" type="primary">M</name>
</gene>
<feature type="chain" id="PRO_0000326312" description="Matrix protein 1">
    <location>
        <begin position="1"/>
        <end position="252"/>
    </location>
</feature>
<feature type="region of interest" description="Membrane-binding" evidence="1">
    <location>
        <begin position="1"/>
        <end position="164"/>
    </location>
</feature>
<feature type="region of interest" description="RNP-binding" evidence="1">
    <location>
        <begin position="165"/>
        <end position="252"/>
    </location>
</feature>
<feature type="short sequence motif" description="Nuclear localization signal" evidence="1">
    <location>
        <begin position="101"/>
        <end position="105"/>
    </location>
</feature>
<protein>
    <recommendedName>
        <fullName evidence="1">Matrix protein 1</fullName>
        <shortName evidence="1">M1</shortName>
    </recommendedName>
</protein>
<sequence length="252" mass="27910">MSLLTEVETYVLSIVPSGPLKAEIAQRLEDVFAGKNTDLEALMEWLKTRPILSPLTKGILGFVFTLTVPSERGLQRRRFVQNALNGNGDPNNMDRAVKLYRKLKREITFHGAKEVALSYSTGALASCMGLIYNRMGTVTTEVAFGLVCATCEQIADSQHRSHRQMVTTTNPLIRHENRMVLASTTAKAMEQMAGSSEQAAEAMEVASQARQMVQAMRTIGTHPSSSAGLKDDLLENLQAYQKRMGVQMQRFK</sequence>
<keyword id="KW-0025">Alternative splicing</keyword>
<keyword id="KW-1048">Host nucleus</keyword>
<keyword id="KW-0472">Membrane</keyword>
<keyword id="KW-0694">RNA-binding</keyword>
<keyword id="KW-0468">Viral matrix protein</keyword>
<keyword id="KW-0946">Virion</keyword>
<name>M1_I80A6</name>